<feature type="signal peptide" evidence="1">
    <location>
        <begin position="1"/>
        <end status="unknown"/>
    </location>
</feature>
<feature type="chain" id="PRO_0000252340" description="Digalactosyldiacylglycerol synthase 2, chloroplastic">
    <location>
        <begin status="unknown"/>
        <end position="473"/>
    </location>
</feature>
<feature type="region of interest" description="Interaction with the membrane lipid bilayer" evidence="5">
    <location>
        <begin position="130"/>
        <end position="148"/>
    </location>
</feature>
<feature type="region of interest" description="Interaction with the membrane lipid bilayer" evidence="5">
    <location>
        <begin position="227"/>
        <end position="245"/>
    </location>
</feature>
<feature type="splice variant" id="VSP_020911" description="In isoform 2." evidence="6">
    <location>
        <begin position="1"/>
        <end position="238"/>
    </location>
</feature>
<feature type="mutagenesis site" description="Abolishes catalytic activity." evidence="4">
    <original>W</original>
    <variation>A</variation>
    <location>
        <position position="19"/>
    </location>
</feature>
<feature type="mutagenesis site" description="Reduces catalytic activity 100-fold." evidence="4">
    <original>W</original>
    <variation>F</variation>
    <location>
        <position position="19"/>
    </location>
</feature>
<feature type="mutagenesis site" description="Reduces catalytic activity 3-fold." evidence="4">
    <original>V</original>
    <variation>A</variation>
    <location>
        <position position="25"/>
    </location>
</feature>
<feature type="mutagenesis site" description="Abolishes catalytic activity." evidence="4">
    <original>W</original>
    <variation>A</variation>
    <location>
        <position position="48"/>
    </location>
</feature>
<feature type="mutagenesis site" description="Reduces catalytic activity 100-fold." evidence="4">
    <original>W</original>
    <variation>F</variation>
    <location>
        <position position="48"/>
    </location>
</feature>
<feature type="mutagenesis site" description="Abolishes catalytic activity." evidence="4">
    <original>W</original>
    <variation>A</variation>
    <location>
        <position position="139"/>
    </location>
</feature>
<feature type="mutagenesis site" description="Reduces catalytic activity 3-fold." evidence="4">
    <original>W</original>
    <variation>F</variation>
    <location>
        <position position="139"/>
    </location>
</feature>
<feature type="mutagenesis site" description="Reduces catalytic activity 50-fold." evidence="4">
    <original>W</original>
    <variation>A</variation>
    <location>
        <position position="177"/>
    </location>
</feature>
<feature type="mutagenesis site" description="Reduces catalytic activity 5-fold." evidence="4">
    <original>W</original>
    <variation>F</variation>
    <location>
        <position position="177"/>
    </location>
</feature>
<feature type="mutagenesis site" description="Reduces catalytic activity 100-fold." evidence="4">
    <original>W</original>
    <variation>A</variation>
    <location>
        <position position="241"/>
    </location>
</feature>
<feature type="mutagenesis site" description="Reduces catalytic activity 50-fold." evidence="4">
    <original>W</original>
    <variation>F</variation>
    <location>
        <position position="241"/>
    </location>
</feature>
<feature type="mutagenesis site" description="Abolishes catalytic activity." evidence="4">
    <original>K</original>
    <variation>A</variation>
    <location>
        <position position="243"/>
    </location>
</feature>
<feature type="mutagenesis site" description="No effect on catalytic activity." evidence="4">
    <original>L</original>
    <variation>A</variation>
    <location>
        <position position="299"/>
    </location>
</feature>
<feature type="mutagenesis site" description="Abolishes catalytic activity." evidence="4">
    <original>D</original>
    <variation>A</variation>
    <location>
        <position position="313"/>
    </location>
</feature>
<feature type="mutagenesis site" description="Slight decrease of catalytic activity." evidence="4">
    <original>C</original>
    <variation>A</variation>
    <location>
        <position position="316"/>
    </location>
</feature>
<feature type="helix" evidence="11">
    <location>
        <begin position="231"/>
        <end position="239"/>
    </location>
</feature>
<feature type="strand" evidence="11">
    <location>
        <begin position="241"/>
        <end position="243"/>
    </location>
</feature>
<name>DGDG2_ARATH</name>
<keyword id="KW-0002">3D-structure</keyword>
<keyword id="KW-0025">Alternative splicing</keyword>
<keyword id="KW-0150">Chloroplast</keyword>
<keyword id="KW-0328">Glycosyltransferase</keyword>
<keyword id="KW-0472">Membrane</keyword>
<keyword id="KW-0934">Plastid</keyword>
<keyword id="KW-1002">Plastid outer membrane</keyword>
<keyword id="KW-1185">Reference proteome</keyword>
<keyword id="KW-0732">Signal</keyword>
<keyword id="KW-0808">Transferase</keyword>
<proteinExistence type="evidence at protein level"/>
<dbReference type="EC" id="2.4.1.241" evidence="4"/>
<dbReference type="EMBL" id="AF421193">
    <property type="protein sequence ID" value="AAL60504.1"/>
    <property type="molecule type" value="mRNA"/>
</dbReference>
<dbReference type="EMBL" id="AF421194">
    <property type="protein sequence ID" value="AAL60505.1"/>
    <property type="molecule type" value="mRNA"/>
</dbReference>
<dbReference type="EMBL" id="KJ138776">
    <property type="protein sequence ID" value="AHL38716.1"/>
    <property type="molecule type" value="mRNA"/>
</dbReference>
<dbReference type="EMBL" id="AF058919">
    <property type="protein sequence ID" value="AAC13625.1"/>
    <property type="status" value="ALT_SEQ"/>
    <property type="molecule type" value="Genomic_DNA"/>
</dbReference>
<dbReference type="EMBL" id="AL161472">
    <property type="protein sequence ID" value="CAB80864.1"/>
    <property type="status" value="ALT_SEQ"/>
    <property type="molecule type" value="Genomic_DNA"/>
</dbReference>
<dbReference type="EMBL" id="CP002687">
    <property type="protein sequence ID" value="AEE81898.1"/>
    <property type="molecule type" value="Genomic_DNA"/>
</dbReference>
<dbReference type="EMBL" id="CP002687">
    <property type="protein sequence ID" value="ANM67739.1"/>
    <property type="molecule type" value="Genomic_DNA"/>
</dbReference>
<dbReference type="EMBL" id="AK228220">
    <property type="protein sequence ID" value="BAF00170.1"/>
    <property type="molecule type" value="mRNA"/>
</dbReference>
<dbReference type="EMBL" id="AK220856">
    <property type="protein sequence ID" value="BAD94208.1"/>
    <property type="status" value="ALT_INIT"/>
    <property type="molecule type" value="mRNA"/>
</dbReference>
<dbReference type="EMBL" id="BT010144">
    <property type="protein sequence ID" value="AAQ22613.1"/>
    <property type="molecule type" value="mRNA"/>
</dbReference>
<dbReference type="PIR" id="T01219">
    <property type="entry name" value="T01219"/>
</dbReference>
<dbReference type="RefSeq" id="NP_001329549.1">
    <molecule id="Q8W1S1-1"/>
    <property type="nucleotide sequence ID" value="NM_001340258.1"/>
</dbReference>
<dbReference type="RefSeq" id="NP_191964.2">
    <molecule id="Q8W1S1-1"/>
    <property type="nucleotide sequence ID" value="NM_116279.5"/>
</dbReference>
<dbReference type="PDB" id="2L7C">
    <property type="method" value="NMR"/>
    <property type="chains" value="A=227-245"/>
</dbReference>
<dbReference type="PDB" id="8P6S">
    <property type="method" value="X-ray"/>
    <property type="resolution" value="2.10 A"/>
    <property type="chains" value="A=1-400"/>
</dbReference>
<dbReference type="PDBsum" id="2L7C"/>
<dbReference type="PDBsum" id="8P6S"/>
<dbReference type="SMR" id="Q8W1S1"/>
<dbReference type="BioGRID" id="13251">
    <property type="interactions" value="2"/>
</dbReference>
<dbReference type="FunCoup" id="Q8W1S1">
    <property type="interactions" value="751"/>
</dbReference>
<dbReference type="IntAct" id="Q8W1S1">
    <property type="interactions" value="2"/>
</dbReference>
<dbReference type="STRING" id="3702.Q8W1S1"/>
<dbReference type="SwissLipids" id="SLP:000001449">
    <molecule id="Q8W1S1-1"/>
</dbReference>
<dbReference type="CAZy" id="GT4">
    <property type="family name" value="Glycosyltransferase Family 4"/>
</dbReference>
<dbReference type="iPTMnet" id="Q8W1S1"/>
<dbReference type="PaxDb" id="3702-AT4G00550.1"/>
<dbReference type="ProteomicsDB" id="224055">
    <molecule id="Q8W1S1-1"/>
</dbReference>
<dbReference type="EnsemblPlants" id="AT4G00550.1">
    <molecule id="Q8W1S1-1"/>
    <property type="protein sequence ID" value="AT4G00550.1"/>
    <property type="gene ID" value="AT4G00550"/>
</dbReference>
<dbReference type="EnsemblPlants" id="AT4G00550.2">
    <molecule id="Q8W1S1-1"/>
    <property type="protein sequence ID" value="AT4G00550.2"/>
    <property type="gene ID" value="AT4G00550"/>
</dbReference>
<dbReference type="GeneID" id="827960"/>
<dbReference type="Gramene" id="AT4G00550.1">
    <molecule id="Q8W1S1-1"/>
    <property type="protein sequence ID" value="AT4G00550.1"/>
    <property type="gene ID" value="AT4G00550"/>
</dbReference>
<dbReference type="Gramene" id="AT4G00550.2">
    <molecule id="Q8W1S1-1"/>
    <property type="protein sequence ID" value="AT4G00550.2"/>
    <property type="gene ID" value="AT4G00550"/>
</dbReference>
<dbReference type="KEGG" id="ath:AT4G00550"/>
<dbReference type="Araport" id="AT4G00550"/>
<dbReference type="TAIR" id="AT4G00550">
    <property type="gene designation" value="DGD2"/>
</dbReference>
<dbReference type="eggNOG" id="ENOG502QQ73">
    <property type="taxonomic scope" value="Eukaryota"/>
</dbReference>
<dbReference type="HOGENOM" id="CLU_011647_1_0_1"/>
<dbReference type="InParanoid" id="Q8W1S1"/>
<dbReference type="OMA" id="FHHGKKW"/>
<dbReference type="OrthoDB" id="44480at2759"/>
<dbReference type="PhylomeDB" id="Q8W1S1"/>
<dbReference type="BioCyc" id="MetaCyc:AT4G00550-MONOMER"/>
<dbReference type="BRENDA" id="2.4.1.241">
    <property type="organism ID" value="399"/>
</dbReference>
<dbReference type="EvolutionaryTrace" id="Q8W1S1"/>
<dbReference type="PRO" id="PR:Q8W1S1"/>
<dbReference type="Proteomes" id="UP000006548">
    <property type="component" value="Chromosome 4"/>
</dbReference>
<dbReference type="ExpressionAtlas" id="Q8W1S1">
    <property type="expression patterns" value="baseline and differential"/>
</dbReference>
<dbReference type="GO" id="GO:0009707">
    <property type="term" value="C:chloroplast outer membrane"/>
    <property type="evidence" value="ECO:0000314"/>
    <property type="project" value="TAIR"/>
</dbReference>
<dbReference type="GO" id="GO:0046481">
    <property type="term" value="F:digalactosyldiacylglycerol synthase activity"/>
    <property type="evidence" value="ECO:0007669"/>
    <property type="project" value="UniProtKB-EC"/>
</dbReference>
<dbReference type="GO" id="GO:0035250">
    <property type="term" value="F:UDP-galactosyltransferase activity"/>
    <property type="evidence" value="ECO:0000304"/>
    <property type="project" value="TAIR"/>
</dbReference>
<dbReference type="GO" id="GO:0008194">
    <property type="term" value="F:UDP-glycosyltransferase activity"/>
    <property type="evidence" value="ECO:0000314"/>
    <property type="project" value="TAIR"/>
</dbReference>
<dbReference type="GO" id="GO:0016036">
    <property type="term" value="P:cellular response to phosphate starvation"/>
    <property type="evidence" value="ECO:0000270"/>
    <property type="project" value="TAIR"/>
</dbReference>
<dbReference type="GO" id="GO:0009247">
    <property type="term" value="P:glycolipid biosynthetic process"/>
    <property type="evidence" value="ECO:0000314"/>
    <property type="project" value="TAIR"/>
</dbReference>
<dbReference type="CDD" id="cd01635">
    <property type="entry name" value="Glycosyltransferase_GTB-type"/>
    <property type="match status" value="1"/>
</dbReference>
<dbReference type="FunFam" id="3.40.50.2000:FF:000084">
    <property type="entry name" value="Digalactosyldiacylglycerol synthase 2 chloroplastic"/>
    <property type="match status" value="1"/>
</dbReference>
<dbReference type="Gene3D" id="3.40.50.2000">
    <property type="entry name" value="Glycogen Phosphorylase B"/>
    <property type="match status" value="1"/>
</dbReference>
<dbReference type="InterPro" id="IPR044525">
    <property type="entry name" value="DGDG1/2"/>
</dbReference>
<dbReference type="InterPro" id="IPR001296">
    <property type="entry name" value="Glyco_trans_1"/>
</dbReference>
<dbReference type="PANTHER" id="PTHR46132">
    <property type="entry name" value="DIGALACTOSYLDIACYLGLYCEROL SYNTHASE 2, CHLOROPLASTIC"/>
    <property type="match status" value="1"/>
</dbReference>
<dbReference type="PANTHER" id="PTHR46132:SF1">
    <property type="entry name" value="DIGALACTOSYLDIACYLGLYCEROL SYNTHASE 2, CHLOROPLASTIC"/>
    <property type="match status" value="1"/>
</dbReference>
<dbReference type="Pfam" id="PF00534">
    <property type="entry name" value="Glycos_transf_1"/>
    <property type="match status" value="1"/>
</dbReference>
<dbReference type="SUPFAM" id="SSF53756">
    <property type="entry name" value="UDP-Glycosyltransferase/glycogen phosphorylase"/>
    <property type="match status" value="1"/>
</dbReference>
<protein>
    <recommendedName>
        <fullName evidence="6">Digalactosyldiacylglycerol synthase 2, chloroplastic</fullName>
        <ecNumber evidence="4">2.4.1.241</ecNumber>
    </recommendedName>
</protein>
<evidence type="ECO:0000255" key="1"/>
<evidence type="ECO:0000269" key="2">
    <source>
    </source>
</evidence>
<evidence type="ECO:0000269" key="3">
    <source>
    </source>
</evidence>
<evidence type="ECO:0000269" key="4">
    <source>
    </source>
</evidence>
<evidence type="ECO:0000269" key="5">
    <source>
    </source>
</evidence>
<evidence type="ECO:0000303" key="6">
    <source>
    </source>
</evidence>
<evidence type="ECO:0000305" key="7"/>
<evidence type="ECO:0000305" key="8">
    <source>
    </source>
</evidence>
<evidence type="ECO:0000312" key="9">
    <source>
        <dbReference type="Araport" id="AT4G00550"/>
    </source>
</evidence>
<evidence type="ECO:0000312" key="10">
    <source>
        <dbReference type="EMBL" id="AAC13625.1"/>
    </source>
</evidence>
<evidence type="ECO:0007829" key="11">
    <source>
        <dbReference type="PDB" id="2L7C"/>
    </source>
</evidence>
<gene>
    <name evidence="6" type="primary">DGD2</name>
    <name evidence="9" type="ordered locus">At4g00550</name>
    <name evidence="10" type="ORF">F6N23.24</name>
</gene>
<accession>Q8W1S1</accession>
<accession>O65264</accession>
<accession>Q56ZV5</accession>
<accession>Q8W1S0</accession>
<accession>W8PV82</accession>
<comment type="function">
    <text evidence="2 3 8">Involved in the synthesis of diacylglycerol galactolipids that are specifically found in thylakoid membranes. Specific for alpha-glycosidic linkages (PubMed:11696551, PubMed:14600212). During phosphate shortage, involved in the biosynthesis of digalactosyldiacylglycerol (DGDG) which rescues the limitation of phospholipids (Probable).</text>
</comment>
<comment type="catalytic activity">
    <reaction evidence="4">
        <text>a 1,2-diacyl-3-O-(beta-D-galactosyl)-sn-glycerol + UDP-alpha-D-galactose = a 1,2-diacyl-3-O-[alpha-D-galactosyl-(1-&gt;6)-beta-D-galactosyl]-sn-glycerol + UDP + H(+)</text>
        <dbReference type="Rhea" id="RHEA:10520"/>
        <dbReference type="ChEBI" id="CHEBI:15378"/>
        <dbReference type="ChEBI" id="CHEBI:17615"/>
        <dbReference type="ChEBI" id="CHEBI:28396"/>
        <dbReference type="ChEBI" id="CHEBI:58223"/>
        <dbReference type="ChEBI" id="CHEBI:66914"/>
        <dbReference type="EC" id="2.4.1.241"/>
    </reaction>
</comment>
<comment type="activity regulation">
    <text evidence="4">Stimulated by anionic phospholipids.</text>
</comment>
<comment type="subcellular location">
    <subcellularLocation>
        <location evidence="3">Plastid</location>
        <location evidence="3">Chloroplast outer membrane</location>
    </subcellularLocation>
</comment>
<comment type="alternative products">
    <event type="alternative splicing"/>
    <isoform>
        <id>Q8W1S1-1</id>
        <name>1</name>
        <sequence type="displayed"/>
    </isoform>
    <isoform>
        <id>Q8W1S1-2</id>
        <name>2</name>
        <sequence type="described" ref="VSP_020911"/>
    </isoform>
</comment>
<comment type="tissue specificity">
    <text evidence="3">Expressed in leaves, flowers and roots, but not in stems and siliques.</text>
</comment>
<comment type="induction">
    <text evidence="2 3">30-fold up-regulation by phosphate deficiency.</text>
</comment>
<comment type="disruption phenotype">
    <text evidence="3">No visible phenotype under normal growth conditions.</text>
</comment>
<comment type="similarity">
    <text evidence="7">Belongs to the glycosyltransferase group 1 family. Glycosyltransferase 4 subfamily.</text>
</comment>
<comment type="sequence caution" evidence="7">
    <conflict type="erroneous gene model prediction">
        <sequence resource="EMBL-CDS" id="AAC13625"/>
    </conflict>
</comment>
<comment type="sequence caution" evidence="7">
    <conflict type="erroneous initiation">
        <sequence resource="EMBL-CDS" id="BAD94208"/>
    </conflict>
</comment>
<comment type="sequence caution" evidence="7">
    <conflict type="erroneous gene model prediction">
        <sequence resource="EMBL-CDS" id="CAB80864"/>
    </conflict>
</comment>
<reference key="1">
    <citation type="journal article" date="2002" name="J. Biol. Chem.">
        <title>DGD2, an arabidopsis gene encoding a UDP-galactose-dependent digalactosyldiacylglycerol synthase is expressed during growth under phosphate-limiting conditions.</title>
        <authorList>
            <person name="Kelly A.A."/>
            <person name="Doermann P."/>
        </authorList>
    </citation>
    <scope>NUCLEOTIDE SEQUENCE [MRNA] (ISOFORMS 1 AND 2)</scope>
    <scope>FUNCTION</scope>
    <scope>INDUCTION</scope>
</reference>
<reference key="2">
    <citation type="journal article" date="2014" name="Plant J.">
        <title>The plant glycosyltransferase clone collection for functional genomics.</title>
        <authorList>
            <person name="Lao J."/>
            <person name="Oikawa A."/>
            <person name="Bromley J.R."/>
            <person name="McInerney P."/>
            <person name="Suttangkakul A."/>
            <person name="Smith-Moritz A.M."/>
            <person name="Plahar H."/>
            <person name="Chiu T.-Y."/>
            <person name="Gonzalez Fernandez-Nino S.M.G."/>
            <person name="Ebert B."/>
            <person name="Yang F."/>
            <person name="Christiansen K.M."/>
            <person name="Hansen S.F."/>
            <person name="Stonebloom S."/>
            <person name="Adams P.D."/>
            <person name="Ronald P.C."/>
            <person name="Hillson N.J."/>
            <person name="Hadi M.Z."/>
            <person name="Vega-Sanchez M.E."/>
            <person name="Loque D."/>
            <person name="Scheller H.V."/>
            <person name="Heazlewood J.L."/>
        </authorList>
    </citation>
    <scope>NUCLEOTIDE SEQUENCE [MRNA]</scope>
</reference>
<reference key="3">
    <citation type="journal article" date="1999" name="Nature">
        <title>Sequence and analysis of chromosome 4 of the plant Arabidopsis thaliana.</title>
        <authorList>
            <person name="Mayer K.F.X."/>
            <person name="Schueller C."/>
            <person name="Wambutt R."/>
            <person name="Murphy G."/>
            <person name="Volckaert G."/>
            <person name="Pohl T."/>
            <person name="Duesterhoeft A."/>
            <person name="Stiekema W."/>
            <person name="Entian K.-D."/>
            <person name="Terryn N."/>
            <person name="Harris B."/>
            <person name="Ansorge W."/>
            <person name="Brandt P."/>
            <person name="Grivell L.A."/>
            <person name="Rieger M."/>
            <person name="Weichselgartner M."/>
            <person name="de Simone V."/>
            <person name="Obermaier B."/>
            <person name="Mache R."/>
            <person name="Mueller M."/>
            <person name="Kreis M."/>
            <person name="Delseny M."/>
            <person name="Puigdomenech P."/>
            <person name="Watson M."/>
            <person name="Schmidtheini T."/>
            <person name="Reichert B."/>
            <person name="Portetelle D."/>
            <person name="Perez-Alonso M."/>
            <person name="Boutry M."/>
            <person name="Bancroft I."/>
            <person name="Vos P."/>
            <person name="Hoheisel J."/>
            <person name="Zimmermann W."/>
            <person name="Wedler H."/>
            <person name="Ridley P."/>
            <person name="Langham S.-A."/>
            <person name="McCullagh B."/>
            <person name="Bilham L."/>
            <person name="Robben J."/>
            <person name="van der Schueren J."/>
            <person name="Grymonprez B."/>
            <person name="Chuang Y.-J."/>
            <person name="Vandenbussche F."/>
            <person name="Braeken M."/>
            <person name="Weltjens I."/>
            <person name="Voet M."/>
            <person name="Bastiaens I."/>
            <person name="Aert R."/>
            <person name="Defoor E."/>
            <person name="Weitzenegger T."/>
            <person name="Bothe G."/>
            <person name="Ramsperger U."/>
            <person name="Hilbert H."/>
            <person name="Braun M."/>
            <person name="Holzer E."/>
            <person name="Brandt A."/>
            <person name="Peters S."/>
            <person name="van Staveren M."/>
            <person name="Dirkse W."/>
            <person name="Mooijman P."/>
            <person name="Klein Lankhorst R."/>
            <person name="Rose M."/>
            <person name="Hauf J."/>
            <person name="Koetter P."/>
            <person name="Berneiser S."/>
            <person name="Hempel S."/>
            <person name="Feldpausch M."/>
            <person name="Lamberth S."/>
            <person name="Van den Daele H."/>
            <person name="De Keyser A."/>
            <person name="Buysshaert C."/>
            <person name="Gielen J."/>
            <person name="Villarroel R."/>
            <person name="De Clercq R."/>
            <person name="van Montagu M."/>
            <person name="Rogers J."/>
            <person name="Cronin A."/>
            <person name="Quail M.A."/>
            <person name="Bray-Allen S."/>
            <person name="Clark L."/>
            <person name="Doggett J."/>
            <person name="Hall S."/>
            <person name="Kay M."/>
            <person name="Lennard N."/>
            <person name="McLay K."/>
            <person name="Mayes R."/>
            <person name="Pettett A."/>
            <person name="Rajandream M.A."/>
            <person name="Lyne M."/>
            <person name="Benes V."/>
            <person name="Rechmann S."/>
            <person name="Borkova D."/>
            <person name="Bloecker H."/>
            <person name="Scharfe M."/>
            <person name="Grimm M."/>
            <person name="Loehnert T.-H."/>
            <person name="Dose S."/>
            <person name="de Haan M."/>
            <person name="Maarse A.C."/>
            <person name="Schaefer M."/>
            <person name="Mueller-Auer S."/>
            <person name="Gabel C."/>
            <person name="Fuchs M."/>
            <person name="Fartmann B."/>
            <person name="Granderath K."/>
            <person name="Dauner D."/>
            <person name="Herzl A."/>
            <person name="Neumann S."/>
            <person name="Argiriou A."/>
            <person name="Vitale D."/>
            <person name="Liguori R."/>
            <person name="Piravandi E."/>
            <person name="Massenet O."/>
            <person name="Quigley F."/>
            <person name="Clabauld G."/>
            <person name="Muendlein A."/>
            <person name="Felber R."/>
            <person name="Schnabl S."/>
            <person name="Hiller R."/>
            <person name="Schmidt W."/>
            <person name="Lecharny A."/>
            <person name="Aubourg S."/>
            <person name="Chefdor F."/>
            <person name="Cooke R."/>
            <person name="Berger C."/>
            <person name="Monfort A."/>
            <person name="Casacuberta E."/>
            <person name="Gibbons T."/>
            <person name="Weber N."/>
            <person name="Vandenbol M."/>
            <person name="Bargues M."/>
            <person name="Terol J."/>
            <person name="Torres A."/>
            <person name="Perez-Perez A."/>
            <person name="Purnelle B."/>
            <person name="Bent E."/>
            <person name="Johnson S."/>
            <person name="Tacon D."/>
            <person name="Jesse T."/>
            <person name="Heijnen L."/>
            <person name="Schwarz S."/>
            <person name="Scholler P."/>
            <person name="Heber S."/>
            <person name="Francs P."/>
            <person name="Bielke C."/>
            <person name="Frishman D."/>
            <person name="Haase D."/>
            <person name="Lemcke K."/>
            <person name="Mewes H.-W."/>
            <person name="Stocker S."/>
            <person name="Zaccaria P."/>
            <person name="Bevan M."/>
            <person name="Wilson R.K."/>
            <person name="de la Bastide M."/>
            <person name="Habermann K."/>
            <person name="Parnell L."/>
            <person name="Dedhia N."/>
            <person name="Gnoj L."/>
            <person name="Schutz K."/>
            <person name="Huang E."/>
            <person name="Spiegel L."/>
            <person name="Sekhon M."/>
            <person name="Murray J."/>
            <person name="Sheet P."/>
            <person name="Cordes M."/>
            <person name="Abu-Threideh J."/>
            <person name="Stoneking T."/>
            <person name="Kalicki J."/>
            <person name="Graves T."/>
            <person name="Harmon G."/>
            <person name="Edwards J."/>
            <person name="Latreille P."/>
            <person name="Courtney L."/>
            <person name="Cloud J."/>
            <person name="Abbott A."/>
            <person name="Scott K."/>
            <person name="Johnson D."/>
            <person name="Minx P."/>
            <person name="Bentley D."/>
            <person name="Fulton B."/>
            <person name="Miller N."/>
            <person name="Greco T."/>
            <person name="Kemp K."/>
            <person name="Kramer J."/>
            <person name="Fulton L."/>
            <person name="Mardis E."/>
            <person name="Dante M."/>
            <person name="Pepin K."/>
            <person name="Hillier L.W."/>
            <person name="Nelson J."/>
            <person name="Spieth J."/>
            <person name="Ryan E."/>
            <person name="Andrews S."/>
            <person name="Geisel C."/>
            <person name="Layman D."/>
            <person name="Du H."/>
            <person name="Ali J."/>
            <person name="Berghoff A."/>
            <person name="Jones K."/>
            <person name="Drone K."/>
            <person name="Cotton M."/>
            <person name="Joshu C."/>
            <person name="Antonoiu B."/>
            <person name="Zidanic M."/>
            <person name="Strong C."/>
            <person name="Sun H."/>
            <person name="Lamar B."/>
            <person name="Yordan C."/>
            <person name="Ma P."/>
            <person name="Zhong J."/>
            <person name="Preston R."/>
            <person name="Vil D."/>
            <person name="Shekher M."/>
            <person name="Matero A."/>
            <person name="Shah R."/>
            <person name="Swaby I.K."/>
            <person name="O'Shaughnessy A."/>
            <person name="Rodriguez M."/>
            <person name="Hoffman J."/>
            <person name="Till S."/>
            <person name="Granat S."/>
            <person name="Shohdy N."/>
            <person name="Hasegawa A."/>
            <person name="Hameed A."/>
            <person name="Lodhi M."/>
            <person name="Johnson A."/>
            <person name="Chen E."/>
            <person name="Marra M.A."/>
            <person name="Martienssen R."/>
            <person name="McCombie W.R."/>
        </authorList>
    </citation>
    <scope>NUCLEOTIDE SEQUENCE [LARGE SCALE GENOMIC DNA]</scope>
    <source>
        <strain>cv. Columbia</strain>
    </source>
</reference>
<reference key="4">
    <citation type="journal article" date="2017" name="Plant J.">
        <title>Araport11: a complete reannotation of the Arabidopsis thaliana reference genome.</title>
        <authorList>
            <person name="Cheng C.Y."/>
            <person name="Krishnakumar V."/>
            <person name="Chan A.P."/>
            <person name="Thibaud-Nissen F."/>
            <person name="Schobel S."/>
            <person name="Town C.D."/>
        </authorList>
    </citation>
    <scope>GENOME REANNOTATION</scope>
    <source>
        <strain>cv. Columbia</strain>
    </source>
</reference>
<reference key="5">
    <citation type="submission" date="2006-07" db="EMBL/GenBank/DDBJ databases">
        <title>Large-scale analysis of RIKEN Arabidopsis full-length (RAFL) cDNAs.</title>
        <authorList>
            <person name="Totoki Y."/>
            <person name="Seki M."/>
            <person name="Ishida J."/>
            <person name="Nakajima M."/>
            <person name="Enju A."/>
            <person name="Kamiya A."/>
            <person name="Narusaka M."/>
            <person name="Shin-i T."/>
            <person name="Nakagawa M."/>
            <person name="Sakamoto N."/>
            <person name="Oishi K."/>
            <person name="Kohara Y."/>
            <person name="Kobayashi M."/>
            <person name="Toyoda A."/>
            <person name="Sakaki Y."/>
            <person name="Sakurai T."/>
            <person name="Iida K."/>
            <person name="Akiyama K."/>
            <person name="Satou M."/>
            <person name="Toyoda T."/>
            <person name="Konagaya A."/>
            <person name="Carninci P."/>
            <person name="Kawai J."/>
            <person name="Hayashizaki Y."/>
            <person name="Shinozaki K."/>
        </authorList>
    </citation>
    <scope>NUCLEOTIDE SEQUENCE [LARGE SCALE MRNA] (ISOFORM 1)</scope>
    <source>
        <strain>cv. Columbia</strain>
    </source>
</reference>
<reference key="6">
    <citation type="journal article" date="2003" name="Science">
        <title>Empirical analysis of transcriptional activity in the Arabidopsis genome.</title>
        <authorList>
            <person name="Yamada K."/>
            <person name="Lim J."/>
            <person name="Dale J.M."/>
            <person name="Chen H."/>
            <person name="Shinn P."/>
            <person name="Palm C.J."/>
            <person name="Southwick A.M."/>
            <person name="Wu H.C."/>
            <person name="Kim C.J."/>
            <person name="Nguyen M."/>
            <person name="Pham P.K."/>
            <person name="Cheuk R.F."/>
            <person name="Karlin-Newmann G."/>
            <person name="Liu S.X."/>
            <person name="Lam B."/>
            <person name="Sakano H."/>
            <person name="Wu T."/>
            <person name="Yu G."/>
            <person name="Miranda M."/>
            <person name="Quach H.L."/>
            <person name="Tripp M."/>
            <person name="Chang C.H."/>
            <person name="Lee J.M."/>
            <person name="Toriumi M.J."/>
            <person name="Chan M.M."/>
            <person name="Tang C.C."/>
            <person name="Onodera C.S."/>
            <person name="Deng J.M."/>
            <person name="Akiyama K."/>
            <person name="Ansari Y."/>
            <person name="Arakawa T."/>
            <person name="Banh J."/>
            <person name="Banno F."/>
            <person name="Bowser L."/>
            <person name="Brooks S.Y."/>
            <person name="Carninci P."/>
            <person name="Chao Q."/>
            <person name="Choy N."/>
            <person name="Enju A."/>
            <person name="Goldsmith A.D."/>
            <person name="Gurjal M."/>
            <person name="Hansen N.F."/>
            <person name="Hayashizaki Y."/>
            <person name="Johnson-Hopson C."/>
            <person name="Hsuan V.W."/>
            <person name="Iida K."/>
            <person name="Karnes M."/>
            <person name="Khan S."/>
            <person name="Koesema E."/>
            <person name="Ishida J."/>
            <person name="Jiang P.X."/>
            <person name="Jones T."/>
            <person name="Kawai J."/>
            <person name="Kamiya A."/>
            <person name="Meyers C."/>
            <person name="Nakajima M."/>
            <person name="Narusaka M."/>
            <person name="Seki M."/>
            <person name="Sakurai T."/>
            <person name="Satou M."/>
            <person name="Tamse R."/>
            <person name="Vaysberg M."/>
            <person name="Wallender E.K."/>
            <person name="Wong C."/>
            <person name="Yamamura Y."/>
            <person name="Yuan S."/>
            <person name="Shinozaki K."/>
            <person name="Davis R.W."/>
            <person name="Theologis A."/>
            <person name="Ecker J.R."/>
        </authorList>
    </citation>
    <scope>NUCLEOTIDE SEQUENCE [LARGE SCALE MRNA] (ISOFORM 1)</scope>
    <source>
        <strain>cv. Columbia</strain>
    </source>
</reference>
<reference key="7">
    <citation type="journal article" date="2003" name="Plant Cell">
        <title>Disruption of the two digalactosyldiacylglycerol synthase genes DGD1 and DGD2 in Arabidopsis reveals the existence of an additional enzyme of galactolipid synthesis.</title>
        <authorList>
            <person name="Kelly A.A."/>
            <person name="Froehlich J.E."/>
            <person name="Doermann P."/>
        </authorList>
    </citation>
    <scope>INDUCTION</scope>
    <scope>TISSUE SPECIFICITY</scope>
    <scope>SUBCELLULAR LOCATION</scope>
    <scope>FUNCTION</scope>
    <scope>DISRUPTION PHENOTYPE</scope>
</reference>
<reference key="8">
    <citation type="journal article" date="2011" name="J. Biol. Chem.">
        <title>Tryptophan residues promote membrane association for a plant lipid glycosyltransferase involved in phosphate stress.</title>
        <authorList>
            <person name="Ge C."/>
            <person name="Georgiev A."/>
            <person name="Oehman A."/>
            <person name="Wieslander A."/>
            <person name="Kelly A.A."/>
        </authorList>
    </citation>
    <scope>CATALYTIC ACTIVITY</scope>
    <scope>ACTIVITY REGULATION</scope>
    <scope>MUTAGENESIS OF TRP-19; VAL-25; TRP-48; TRP-139; TRP-177; TRP-241; LYS-243; LEU-299; ASP-313 AND CYS-316</scope>
</reference>
<reference key="9">
    <citation type="journal article" date="2011" name="Biochemistry">
        <title>Lipid interacting regions in phosphate stress glycosyltransferase atDGD2 from Arabidopsis thaliana.</title>
        <authorList>
            <person name="Szpryngiel S."/>
            <person name="Ge C."/>
            <person name="Iakovleva I."/>
            <person name="Georgiev A."/>
            <person name="Lind J."/>
            <person name="Wieslander A."/>
            <person name="Maler L."/>
        </authorList>
    </citation>
    <scope>STRUCTURE BY NMR OF 227-245</scope>
    <scope>FUNCTION</scope>
    <scope>INTERACTION WITH LIPIDS</scope>
</reference>
<sequence length="473" mass="53907">MTNQQEQHIAIFTTASIPWLTGTAVNPLFRAAYLANDGERRVTLVIPWLTLKHQKLVYPNSITFSSPSEQEAYVRQWLEERVSFRLAFEIRFYPGKFAIDKRSILPVGDISDAIPDEEADIAVLEEPEHLTWFHHGQKWKTKFNYVIGIVHTNYLEYVKREKQGRVKAFFLKYLNSWVVGIYCHKVIRLSAATQEYPKSIVCNVHGVNPKFLEIGLRKLEQQKLQEQPFTKGAYYIGKMVWSKGYKELLKLLEKHQKELAELEVDLYGDGEDSEEIKEAARKLDLTVNVYPGRDHADSLFHNYKVFLNPSTTDVVCTTTAEALAMGKIVVCANHISNKFFKQFPNCRTYDDGQGFVRATLKALGEQPSQLTEQQRHELSWEAATQRFIKVSDLNRLSRADSNLSKRSVFASSSISVGKNLEDMSAYIHFLASGFEASRTAFGAIPGSLQPDEELCRDLGLSLNTPSPNTRKQD</sequence>
<organism>
    <name type="scientific">Arabidopsis thaliana</name>
    <name type="common">Mouse-ear cress</name>
    <dbReference type="NCBI Taxonomy" id="3702"/>
    <lineage>
        <taxon>Eukaryota</taxon>
        <taxon>Viridiplantae</taxon>
        <taxon>Streptophyta</taxon>
        <taxon>Embryophyta</taxon>
        <taxon>Tracheophyta</taxon>
        <taxon>Spermatophyta</taxon>
        <taxon>Magnoliopsida</taxon>
        <taxon>eudicotyledons</taxon>
        <taxon>Gunneridae</taxon>
        <taxon>Pentapetalae</taxon>
        <taxon>rosids</taxon>
        <taxon>malvids</taxon>
        <taxon>Brassicales</taxon>
        <taxon>Brassicaceae</taxon>
        <taxon>Camelineae</taxon>
        <taxon>Arabidopsis</taxon>
    </lineage>
</organism>